<reference key="1">
    <citation type="submission" date="2008-08" db="EMBL/GenBank/DDBJ databases">
        <title>Complete sequence of Anaeromyxobacter sp. K.</title>
        <authorList>
            <consortium name="US DOE Joint Genome Institute"/>
            <person name="Lucas S."/>
            <person name="Copeland A."/>
            <person name="Lapidus A."/>
            <person name="Glavina del Rio T."/>
            <person name="Dalin E."/>
            <person name="Tice H."/>
            <person name="Bruce D."/>
            <person name="Goodwin L."/>
            <person name="Pitluck S."/>
            <person name="Saunders E."/>
            <person name="Brettin T."/>
            <person name="Detter J.C."/>
            <person name="Han C."/>
            <person name="Larimer F."/>
            <person name="Land M."/>
            <person name="Hauser L."/>
            <person name="Kyrpides N."/>
            <person name="Ovchinnikiva G."/>
            <person name="Beliaev A."/>
        </authorList>
    </citation>
    <scope>NUCLEOTIDE SEQUENCE [LARGE SCALE GENOMIC DNA]</scope>
    <source>
        <strain>K</strain>
    </source>
</reference>
<feature type="chain" id="PRO_0000367160" description="UPF0173 metal-dependent hydrolase AnaeK_1127">
    <location>
        <begin position="1"/>
        <end position="274"/>
    </location>
</feature>
<proteinExistence type="inferred from homology"/>
<comment type="similarity">
    <text evidence="1">Belongs to the UPF0173 family.</text>
</comment>
<keyword id="KW-0378">Hydrolase</keyword>
<organism>
    <name type="scientific">Anaeromyxobacter sp. (strain K)</name>
    <dbReference type="NCBI Taxonomy" id="447217"/>
    <lineage>
        <taxon>Bacteria</taxon>
        <taxon>Pseudomonadati</taxon>
        <taxon>Myxococcota</taxon>
        <taxon>Myxococcia</taxon>
        <taxon>Myxococcales</taxon>
        <taxon>Cystobacterineae</taxon>
        <taxon>Anaeromyxobacteraceae</taxon>
        <taxon>Anaeromyxobacter</taxon>
    </lineage>
</organism>
<accession>B4UGT5</accession>
<protein>
    <recommendedName>
        <fullName evidence="1">UPF0173 metal-dependent hydrolase AnaeK_1127</fullName>
    </recommendedName>
</protein>
<evidence type="ECO:0000255" key="1">
    <source>
        <dbReference type="HAMAP-Rule" id="MF_00457"/>
    </source>
</evidence>
<sequence>MPSASSPRARLAALAVAALAAAPLAASAQPKAARGKTEVTWYGHAAFLVTTPGGTVLAIDPWLSNPKAPEPGLAEKLPKVDYILVSHGHFDHVGDAVALAKRTGAKLITNFDLGSSLVAAGYPKDQAGMDTLGNMGGTIQAGDAAVTMVAAVHSSGFADDKGAAHPGGNPMGFVIQVKGGPTLYHTGDTDLTQDMKQLPERFGRVDVMLTCIGGHFTMDPKAAAIAVGYVRPRTVVPMHFGTFPAIAGTPEELRAALKGKAEVRVLEPGKPVAF</sequence>
<name>Y1127_ANASK</name>
<gene>
    <name type="ordered locus">AnaeK_1127</name>
</gene>
<dbReference type="EMBL" id="CP001131">
    <property type="protein sequence ID" value="ACG72360.1"/>
    <property type="molecule type" value="Genomic_DNA"/>
</dbReference>
<dbReference type="RefSeq" id="WP_012525186.1">
    <property type="nucleotide sequence ID" value="NC_011145.1"/>
</dbReference>
<dbReference type="SMR" id="B4UGT5"/>
<dbReference type="KEGG" id="ank:AnaeK_1127"/>
<dbReference type="HOGENOM" id="CLU_070010_4_0_7"/>
<dbReference type="OrthoDB" id="9789133at2"/>
<dbReference type="Proteomes" id="UP000001871">
    <property type="component" value="Chromosome"/>
</dbReference>
<dbReference type="GO" id="GO:0016787">
    <property type="term" value="F:hydrolase activity"/>
    <property type="evidence" value="ECO:0007669"/>
    <property type="project" value="UniProtKB-UniRule"/>
</dbReference>
<dbReference type="Gene3D" id="3.60.15.10">
    <property type="entry name" value="Ribonuclease Z/Hydroxyacylglutathione hydrolase-like"/>
    <property type="match status" value="1"/>
</dbReference>
<dbReference type="HAMAP" id="MF_00457">
    <property type="entry name" value="UPF0173"/>
    <property type="match status" value="1"/>
</dbReference>
<dbReference type="InterPro" id="IPR001279">
    <property type="entry name" value="Metallo-B-lactamas"/>
</dbReference>
<dbReference type="InterPro" id="IPR036866">
    <property type="entry name" value="RibonucZ/Hydroxyglut_hydro"/>
</dbReference>
<dbReference type="InterPro" id="IPR022877">
    <property type="entry name" value="UPF0173"/>
</dbReference>
<dbReference type="InterPro" id="IPR050114">
    <property type="entry name" value="UPF0173_UPF0282_UlaG_hydrolase"/>
</dbReference>
<dbReference type="NCBIfam" id="NF001911">
    <property type="entry name" value="PRK00685.1"/>
    <property type="match status" value="1"/>
</dbReference>
<dbReference type="PANTHER" id="PTHR43546:SF3">
    <property type="entry name" value="UPF0173 METAL-DEPENDENT HYDROLASE MJ1163"/>
    <property type="match status" value="1"/>
</dbReference>
<dbReference type="PANTHER" id="PTHR43546">
    <property type="entry name" value="UPF0173 METAL-DEPENDENT HYDROLASE MJ1163-RELATED"/>
    <property type="match status" value="1"/>
</dbReference>
<dbReference type="Pfam" id="PF13483">
    <property type="entry name" value="Lactamase_B_3"/>
    <property type="match status" value="1"/>
</dbReference>
<dbReference type="SMART" id="SM00849">
    <property type="entry name" value="Lactamase_B"/>
    <property type="match status" value="1"/>
</dbReference>
<dbReference type="SUPFAM" id="SSF56281">
    <property type="entry name" value="Metallo-hydrolase/oxidoreductase"/>
    <property type="match status" value="1"/>
</dbReference>